<gene>
    <name evidence="1" type="primary">murG</name>
    <name type="ordered locus">Syncc9902_2147</name>
</gene>
<dbReference type="EC" id="2.4.1.227" evidence="1"/>
<dbReference type="EMBL" id="CP000097">
    <property type="protein sequence ID" value="ABB27105.1"/>
    <property type="molecule type" value="Genomic_DNA"/>
</dbReference>
<dbReference type="RefSeq" id="WP_011360887.1">
    <property type="nucleotide sequence ID" value="NC_007513.1"/>
</dbReference>
<dbReference type="SMR" id="Q3AVX2"/>
<dbReference type="STRING" id="316279.Syncc9902_2147"/>
<dbReference type="CAZy" id="GT28">
    <property type="family name" value="Glycosyltransferase Family 28"/>
</dbReference>
<dbReference type="KEGG" id="sye:Syncc9902_2147"/>
<dbReference type="eggNOG" id="COG0707">
    <property type="taxonomic scope" value="Bacteria"/>
</dbReference>
<dbReference type="HOGENOM" id="CLU_037404_2_1_3"/>
<dbReference type="OrthoDB" id="9808936at2"/>
<dbReference type="UniPathway" id="UPA00219"/>
<dbReference type="Proteomes" id="UP000002712">
    <property type="component" value="Chromosome"/>
</dbReference>
<dbReference type="GO" id="GO:0005886">
    <property type="term" value="C:plasma membrane"/>
    <property type="evidence" value="ECO:0007669"/>
    <property type="project" value="UniProtKB-SubCell"/>
</dbReference>
<dbReference type="GO" id="GO:0051991">
    <property type="term" value="F:UDP-N-acetyl-D-glucosamine:N-acetylmuramoyl-L-alanyl-D-glutamyl-meso-2,6-diaminopimelyl-D-alanyl-D-alanine-diphosphoundecaprenol 4-beta-N-acetylglucosaminlytransferase activity"/>
    <property type="evidence" value="ECO:0007669"/>
    <property type="project" value="RHEA"/>
</dbReference>
<dbReference type="GO" id="GO:0050511">
    <property type="term" value="F:undecaprenyldiphospho-muramoylpentapeptide beta-N-acetylglucosaminyltransferase activity"/>
    <property type="evidence" value="ECO:0007669"/>
    <property type="project" value="UniProtKB-UniRule"/>
</dbReference>
<dbReference type="GO" id="GO:0005975">
    <property type="term" value="P:carbohydrate metabolic process"/>
    <property type="evidence" value="ECO:0007669"/>
    <property type="project" value="InterPro"/>
</dbReference>
<dbReference type="GO" id="GO:0051301">
    <property type="term" value="P:cell division"/>
    <property type="evidence" value="ECO:0007669"/>
    <property type="project" value="UniProtKB-KW"/>
</dbReference>
<dbReference type="GO" id="GO:0071555">
    <property type="term" value="P:cell wall organization"/>
    <property type="evidence" value="ECO:0007669"/>
    <property type="project" value="UniProtKB-KW"/>
</dbReference>
<dbReference type="GO" id="GO:0030259">
    <property type="term" value="P:lipid glycosylation"/>
    <property type="evidence" value="ECO:0007669"/>
    <property type="project" value="UniProtKB-UniRule"/>
</dbReference>
<dbReference type="GO" id="GO:0009252">
    <property type="term" value="P:peptidoglycan biosynthetic process"/>
    <property type="evidence" value="ECO:0007669"/>
    <property type="project" value="UniProtKB-UniRule"/>
</dbReference>
<dbReference type="GO" id="GO:0008360">
    <property type="term" value="P:regulation of cell shape"/>
    <property type="evidence" value="ECO:0007669"/>
    <property type="project" value="UniProtKB-KW"/>
</dbReference>
<dbReference type="CDD" id="cd03785">
    <property type="entry name" value="GT28_MurG"/>
    <property type="match status" value="1"/>
</dbReference>
<dbReference type="Gene3D" id="3.40.50.2000">
    <property type="entry name" value="Glycogen Phosphorylase B"/>
    <property type="match status" value="2"/>
</dbReference>
<dbReference type="HAMAP" id="MF_00033">
    <property type="entry name" value="MurG"/>
    <property type="match status" value="1"/>
</dbReference>
<dbReference type="InterPro" id="IPR006009">
    <property type="entry name" value="GlcNAc_MurG"/>
</dbReference>
<dbReference type="InterPro" id="IPR007235">
    <property type="entry name" value="Glyco_trans_28_C"/>
</dbReference>
<dbReference type="InterPro" id="IPR004276">
    <property type="entry name" value="GlycoTrans_28_N"/>
</dbReference>
<dbReference type="PANTHER" id="PTHR21015:SF22">
    <property type="entry name" value="GLYCOSYLTRANSFERASE"/>
    <property type="match status" value="1"/>
</dbReference>
<dbReference type="PANTHER" id="PTHR21015">
    <property type="entry name" value="UDP-N-ACETYLGLUCOSAMINE--N-ACETYLMURAMYL-(PENTAPEPTIDE) PYROPHOSPHORYL-UNDECAPRENOL N-ACETYLGLUCOSAMINE TRANSFERASE 1"/>
    <property type="match status" value="1"/>
</dbReference>
<dbReference type="Pfam" id="PF04101">
    <property type="entry name" value="Glyco_tran_28_C"/>
    <property type="match status" value="1"/>
</dbReference>
<dbReference type="Pfam" id="PF03033">
    <property type="entry name" value="Glyco_transf_28"/>
    <property type="match status" value="1"/>
</dbReference>
<dbReference type="SUPFAM" id="SSF53756">
    <property type="entry name" value="UDP-Glycosyltransferase/glycogen phosphorylase"/>
    <property type="match status" value="1"/>
</dbReference>
<proteinExistence type="inferred from homology"/>
<name>MURG_SYNS9</name>
<accession>Q3AVX2</accession>
<protein>
    <recommendedName>
        <fullName evidence="1">UDP-N-acetylglucosamine--N-acetylmuramyl-(pentapeptide) pyrophosphoryl-undecaprenol N-acetylglucosamine transferase</fullName>
        <ecNumber evidence="1">2.4.1.227</ecNumber>
    </recommendedName>
    <alternativeName>
        <fullName evidence="1">Undecaprenyl-PP-MurNAc-pentapeptide-UDPGlcNAc GlcNAc transferase</fullName>
    </alternativeName>
</protein>
<organism>
    <name type="scientific">Synechococcus sp. (strain CC9902)</name>
    <dbReference type="NCBI Taxonomy" id="316279"/>
    <lineage>
        <taxon>Bacteria</taxon>
        <taxon>Bacillati</taxon>
        <taxon>Cyanobacteriota</taxon>
        <taxon>Cyanophyceae</taxon>
        <taxon>Synechococcales</taxon>
        <taxon>Synechococcaceae</taxon>
        <taxon>Synechococcus</taxon>
    </lineage>
</organism>
<reference key="1">
    <citation type="submission" date="2005-08" db="EMBL/GenBank/DDBJ databases">
        <title>Complete sequence of Synechococcus sp. CC9902.</title>
        <authorList>
            <person name="Copeland A."/>
            <person name="Lucas S."/>
            <person name="Lapidus A."/>
            <person name="Barry K."/>
            <person name="Detter J.C."/>
            <person name="Glavina T."/>
            <person name="Hammon N."/>
            <person name="Israni S."/>
            <person name="Pitluck S."/>
            <person name="Martinez M."/>
            <person name="Schmutz J."/>
            <person name="Larimer F."/>
            <person name="Land M."/>
            <person name="Kyrpides N."/>
            <person name="Ivanova N."/>
            <person name="Richardson P."/>
        </authorList>
    </citation>
    <scope>NUCLEOTIDE SEQUENCE [LARGE SCALE GENOMIC DNA]</scope>
    <source>
        <strain>CC9902</strain>
    </source>
</reference>
<keyword id="KW-0131">Cell cycle</keyword>
<keyword id="KW-0132">Cell division</keyword>
<keyword id="KW-0997">Cell inner membrane</keyword>
<keyword id="KW-1003">Cell membrane</keyword>
<keyword id="KW-0133">Cell shape</keyword>
<keyword id="KW-0961">Cell wall biogenesis/degradation</keyword>
<keyword id="KW-0328">Glycosyltransferase</keyword>
<keyword id="KW-0472">Membrane</keyword>
<keyword id="KW-0573">Peptidoglycan synthesis</keyword>
<keyword id="KW-1185">Reference proteome</keyword>
<keyword id="KW-0808">Transferase</keyword>
<feature type="chain" id="PRO_0000315189" description="UDP-N-acetylglucosamine--N-acetylmuramyl-(pentapeptide) pyrophosphoryl-undecaprenol N-acetylglucosamine transferase">
    <location>
        <begin position="1"/>
        <end position="358"/>
    </location>
</feature>
<feature type="binding site" evidence="1">
    <location>
        <begin position="11"/>
        <end position="13"/>
    </location>
    <ligand>
        <name>UDP-N-acetyl-alpha-D-glucosamine</name>
        <dbReference type="ChEBI" id="CHEBI:57705"/>
    </ligand>
</feature>
<feature type="binding site" evidence="1">
    <location>
        <position position="120"/>
    </location>
    <ligand>
        <name>UDP-N-acetyl-alpha-D-glucosamine</name>
        <dbReference type="ChEBI" id="CHEBI:57705"/>
    </ligand>
</feature>
<feature type="binding site" evidence="1">
    <location>
        <position position="161"/>
    </location>
    <ligand>
        <name>UDP-N-acetyl-alpha-D-glucosamine</name>
        <dbReference type="ChEBI" id="CHEBI:57705"/>
    </ligand>
</feature>
<feature type="binding site" evidence="1">
    <location>
        <position position="188"/>
    </location>
    <ligand>
        <name>UDP-N-acetyl-alpha-D-glucosamine</name>
        <dbReference type="ChEBI" id="CHEBI:57705"/>
    </ligand>
</feature>
<feature type="binding site" evidence="1">
    <location>
        <position position="282"/>
    </location>
    <ligand>
        <name>UDP-N-acetyl-alpha-D-glucosamine</name>
        <dbReference type="ChEBI" id="CHEBI:57705"/>
    </ligand>
</feature>
<comment type="function">
    <text evidence="1">Cell wall formation. Catalyzes the transfer of a GlcNAc subunit on undecaprenyl-pyrophosphoryl-MurNAc-pentapeptide (lipid intermediate I) to form undecaprenyl-pyrophosphoryl-MurNAc-(pentapeptide)GlcNAc (lipid intermediate II).</text>
</comment>
<comment type="catalytic activity">
    <reaction evidence="1">
        <text>di-trans,octa-cis-undecaprenyl diphospho-N-acetyl-alpha-D-muramoyl-L-alanyl-D-glutamyl-meso-2,6-diaminopimeloyl-D-alanyl-D-alanine + UDP-N-acetyl-alpha-D-glucosamine = di-trans,octa-cis-undecaprenyl diphospho-[N-acetyl-alpha-D-glucosaminyl-(1-&gt;4)]-N-acetyl-alpha-D-muramoyl-L-alanyl-D-glutamyl-meso-2,6-diaminopimeloyl-D-alanyl-D-alanine + UDP + H(+)</text>
        <dbReference type="Rhea" id="RHEA:31227"/>
        <dbReference type="ChEBI" id="CHEBI:15378"/>
        <dbReference type="ChEBI" id="CHEBI:57705"/>
        <dbReference type="ChEBI" id="CHEBI:58223"/>
        <dbReference type="ChEBI" id="CHEBI:61387"/>
        <dbReference type="ChEBI" id="CHEBI:61388"/>
        <dbReference type="EC" id="2.4.1.227"/>
    </reaction>
</comment>
<comment type="pathway">
    <text evidence="1">Cell wall biogenesis; peptidoglycan biosynthesis.</text>
</comment>
<comment type="subcellular location">
    <subcellularLocation>
        <location evidence="1">Cell inner membrane</location>
        <topology evidence="1">Peripheral membrane protein</topology>
        <orientation evidence="1">Cytoplasmic side</orientation>
    </subcellularLocation>
</comment>
<comment type="similarity">
    <text evidence="1">Belongs to the glycosyltransferase 28 family. MurG subfamily.</text>
</comment>
<evidence type="ECO:0000255" key="1">
    <source>
        <dbReference type="HAMAP-Rule" id="MF_00033"/>
    </source>
</evidence>
<sequence length="358" mass="37432">MTRLLIAASGTGGHLFPALAVADALDGHCQVSWLGVPDRLETELVPARFKLITVNAGGLQGRGITKLVQLIRLLAASITVRRLIRTHQIDAVFTTGGYIAAPAILGARWCGVPAVLHESNAIPGRVTRLLGRFCSAVAVGLPVAAGRIPGCRPVLTGTPVRSGFLNAQPLPDWVPSGAGPLLVVMGGSQGAIGLNRMVRAVLPELLEQGCRVVHLTGSNDPDVGELQHPRLVECRFSDDIPGLLQHADLAISRAGAGSLSELAVCGTPSILVPFPQAADQHQDANAACAAELGGAVIVHQHPPGHPALGNSIKRLLGARLGDTDSRPELLEQMRAGMDELAQRDADAQLARLLADLVR</sequence>